<keyword id="KW-0030">Aminoacyl-tRNA synthetase</keyword>
<keyword id="KW-0067">ATP-binding</keyword>
<keyword id="KW-0963">Cytoplasm</keyword>
<keyword id="KW-0436">Ligase</keyword>
<keyword id="KW-0547">Nucleotide-binding</keyword>
<keyword id="KW-0648">Protein biosynthesis</keyword>
<keyword id="KW-1185">Reference proteome</keyword>
<feature type="chain" id="PRO_0000122181" description="Serine--tRNA ligase">
    <location>
        <begin position="1"/>
        <end position="455"/>
    </location>
</feature>
<feature type="binding site" evidence="1">
    <location>
        <begin position="252"/>
        <end position="254"/>
    </location>
    <ligand>
        <name>L-serine</name>
        <dbReference type="ChEBI" id="CHEBI:33384"/>
    </ligand>
</feature>
<feature type="binding site" evidence="1">
    <location>
        <begin position="283"/>
        <end position="285"/>
    </location>
    <ligand>
        <name>ATP</name>
        <dbReference type="ChEBI" id="CHEBI:30616"/>
    </ligand>
</feature>
<feature type="binding site" evidence="1">
    <location>
        <position position="299"/>
    </location>
    <ligand>
        <name>ATP</name>
        <dbReference type="ChEBI" id="CHEBI:30616"/>
    </ligand>
</feature>
<feature type="binding site" evidence="1">
    <location>
        <position position="306"/>
    </location>
    <ligand>
        <name>L-serine</name>
        <dbReference type="ChEBI" id="CHEBI:33384"/>
    </ligand>
</feature>
<feature type="binding site" evidence="1">
    <location>
        <begin position="370"/>
        <end position="373"/>
    </location>
    <ligand>
        <name>ATP</name>
        <dbReference type="ChEBI" id="CHEBI:30616"/>
    </ligand>
</feature>
<feature type="binding site" evidence="1">
    <location>
        <position position="406"/>
    </location>
    <ligand>
        <name>L-serine</name>
        <dbReference type="ChEBI" id="CHEBI:33384"/>
    </ligand>
</feature>
<protein>
    <recommendedName>
        <fullName evidence="1">Serine--tRNA ligase</fullName>
        <ecNumber evidence="1">6.1.1.11</ecNumber>
    </recommendedName>
    <alternativeName>
        <fullName evidence="1">Seryl-tRNA synthetase</fullName>
        <shortName evidence="1">SerRS</shortName>
    </alternativeName>
    <alternativeName>
        <fullName evidence="1">Seryl-tRNA(Ser/Sec) synthetase</fullName>
    </alternativeName>
</protein>
<evidence type="ECO:0000255" key="1">
    <source>
        <dbReference type="HAMAP-Rule" id="MF_00176"/>
    </source>
</evidence>
<dbReference type="EC" id="6.1.1.11" evidence="1"/>
<dbReference type="EMBL" id="AE009950">
    <property type="protein sequence ID" value="AAL81328.1"/>
    <property type="molecule type" value="Genomic_DNA"/>
</dbReference>
<dbReference type="RefSeq" id="WP_011012345.1">
    <property type="nucleotide sequence ID" value="NZ_CP023154.1"/>
</dbReference>
<dbReference type="SMR" id="Q8U1K2"/>
<dbReference type="IntAct" id="Q8U1K2">
    <property type="interactions" value="1"/>
</dbReference>
<dbReference type="STRING" id="186497.PF1204"/>
<dbReference type="PaxDb" id="186497-PF1204"/>
<dbReference type="GeneID" id="41713011"/>
<dbReference type="KEGG" id="pfu:PF1204"/>
<dbReference type="PATRIC" id="fig|186497.12.peg.1265"/>
<dbReference type="eggNOG" id="arCOG00403">
    <property type="taxonomic scope" value="Archaea"/>
</dbReference>
<dbReference type="HOGENOM" id="CLU_023797_0_1_2"/>
<dbReference type="OrthoDB" id="35932at2157"/>
<dbReference type="PhylomeDB" id="Q8U1K2"/>
<dbReference type="UniPathway" id="UPA00906">
    <property type="reaction ID" value="UER00895"/>
</dbReference>
<dbReference type="Proteomes" id="UP000001013">
    <property type="component" value="Chromosome"/>
</dbReference>
<dbReference type="GO" id="GO:0005737">
    <property type="term" value="C:cytoplasm"/>
    <property type="evidence" value="ECO:0007669"/>
    <property type="project" value="UniProtKB-SubCell"/>
</dbReference>
<dbReference type="GO" id="GO:0005524">
    <property type="term" value="F:ATP binding"/>
    <property type="evidence" value="ECO:0007669"/>
    <property type="project" value="UniProtKB-UniRule"/>
</dbReference>
<dbReference type="GO" id="GO:0004828">
    <property type="term" value="F:serine-tRNA ligase activity"/>
    <property type="evidence" value="ECO:0007669"/>
    <property type="project" value="UniProtKB-UniRule"/>
</dbReference>
<dbReference type="GO" id="GO:0016260">
    <property type="term" value="P:selenocysteine biosynthetic process"/>
    <property type="evidence" value="ECO:0007669"/>
    <property type="project" value="UniProtKB-UniRule"/>
</dbReference>
<dbReference type="GO" id="GO:0006434">
    <property type="term" value="P:seryl-tRNA aminoacylation"/>
    <property type="evidence" value="ECO:0007669"/>
    <property type="project" value="UniProtKB-UniRule"/>
</dbReference>
<dbReference type="CDD" id="cd00770">
    <property type="entry name" value="SerRS_core"/>
    <property type="match status" value="1"/>
</dbReference>
<dbReference type="FunFam" id="3.30.930.10:FF:000048">
    <property type="entry name" value="Serine--tRNA ligase"/>
    <property type="match status" value="1"/>
</dbReference>
<dbReference type="Gene3D" id="3.30.930.10">
    <property type="entry name" value="Bira Bifunctional Protein, Domain 2"/>
    <property type="match status" value="1"/>
</dbReference>
<dbReference type="Gene3D" id="1.10.287.40">
    <property type="entry name" value="Serine-tRNA synthetase, tRNA binding domain"/>
    <property type="match status" value="1"/>
</dbReference>
<dbReference type="HAMAP" id="MF_00176">
    <property type="entry name" value="Ser_tRNA_synth_type1"/>
    <property type="match status" value="1"/>
</dbReference>
<dbReference type="InterPro" id="IPR002314">
    <property type="entry name" value="aa-tRNA-synt_IIb"/>
</dbReference>
<dbReference type="InterPro" id="IPR006195">
    <property type="entry name" value="aa-tRNA-synth_II"/>
</dbReference>
<dbReference type="InterPro" id="IPR045864">
    <property type="entry name" value="aa-tRNA-synth_II/BPL/LPL"/>
</dbReference>
<dbReference type="InterPro" id="IPR002317">
    <property type="entry name" value="Ser-tRNA-ligase_type_1"/>
</dbReference>
<dbReference type="InterPro" id="IPR015866">
    <property type="entry name" value="Ser-tRNA-synth_1_N"/>
</dbReference>
<dbReference type="InterPro" id="IPR042103">
    <property type="entry name" value="SerRS_1_N_sf"/>
</dbReference>
<dbReference type="InterPro" id="IPR033729">
    <property type="entry name" value="SerRS_core"/>
</dbReference>
<dbReference type="InterPro" id="IPR010978">
    <property type="entry name" value="tRNA-bd_arm"/>
</dbReference>
<dbReference type="NCBIfam" id="TIGR00414">
    <property type="entry name" value="serS"/>
    <property type="match status" value="1"/>
</dbReference>
<dbReference type="PANTHER" id="PTHR11778">
    <property type="entry name" value="SERYL-TRNA SYNTHETASE"/>
    <property type="match status" value="1"/>
</dbReference>
<dbReference type="Pfam" id="PF02403">
    <property type="entry name" value="Seryl_tRNA_N"/>
    <property type="match status" value="1"/>
</dbReference>
<dbReference type="Pfam" id="PF00587">
    <property type="entry name" value="tRNA-synt_2b"/>
    <property type="match status" value="1"/>
</dbReference>
<dbReference type="PIRSF" id="PIRSF001529">
    <property type="entry name" value="Ser-tRNA-synth_IIa"/>
    <property type="match status" value="1"/>
</dbReference>
<dbReference type="PRINTS" id="PR00981">
    <property type="entry name" value="TRNASYNTHSER"/>
</dbReference>
<dbReference type="SUPFAM" id="SSF55681">
    <property type="entry name" value="Class II aaRS and biotin synthetases"/>
    <property type="match status" value="1"/>
</dbReference>
<dbReference type="SUPFAM" id="SSF46589">
    <property type="entry name" value="tRNA-binding arm"/>
    <property type="match status" value="1"/>
</dbReference>
<dbReference type="PROSITE" id="PS50862">
    <property type="entry name" value="AA_TRNA_LIGASE_II"/>
    <property type="match status" value="1"/>
</dbReference>
<organism>
    <name type="scientific">Pyrococcus furiosus (strain ATCC 43587 / DSM 3638 / JCM 8422 / Vc1)</name>
    <dbReference type="NCBI Taxonomy" id="186497"/>
    <lineage>
        <taxon>Archaea</taxon>
        <taxon>Methanobacteriati</taxon>
        <taxon>Methanobacteriota</taxon>
        <taxon>Thermococci</taxon>
        <taxon>Thermococcales</taxon>
        <taxon>Thermococcaceae</taxon>
        <taxon>Pyrococcus</taxon>
    </lineage>
</organism>
<reference key="1">
    <citation type="journal article" date="1999" name="Genetics">
        <title>Divergence of the hyperthermophilic archaea Pyrococcus furiosus and P. horikoshii inferred from complete genomic sequences.</title>
        <authorList>
            <person name="Maeder D.L."/>
            <person name="Weiss R.B."/>
            <person name="Dunn D.M."/>
            <person name="Cherry J.L."/>
            <person name="Gonzalez J.M."/>
            <person name="DiRuggiero J."/>
            <person name="Robb F.T."/>
        </authorList>
    </citation>
    <scope>NUCLEOTIDE SEQUENCE [LARGE SCALE GENOMIC DNA]</scope>
    <source>
        <strain>ATCC 43587 / DSM 3638 / JCM 8422 / Vc1</strain>
    </source>
</reference>
<gene>
    <name evidence="1" type="primary">serS</name>
    <name type="ordered locus">PF1204</name>
</gene>
<comment type="function">
    <text evidence="1">Catalyzes the attachment of serine to tRNA(Ser). Is also able to aminoacylate tRNA(Sec) with serine, to form the misacylated tRNA L-seryl-tRNA(Sec), which will be further converted into selenocysteinyl-tRNA(Sec).</text>
</comment>
<comment type="catalytic activity">
    <reaction evidence="1">
        <text>tRNA(Ser) + L-serine + ATP = L-seryl-tRNA(Ser) + AMP + diphosphate + H(+)</text>
        <dbReference type="Rhea" id="RHEA:12292"/>
        <dbReference type="Rhea" id="RHEA-COMP:9669"/>
        <dbReference type="Rhea" id="RHEA-COMP:9703"/>
        <dbReference type="ChEBI" id="CHEBI:15378"/>
        <dbReference type="ChEBI" id="CHEBI:30616"/>
        <dbReference type="ChEBI" id="CHEBI:33019"/>
        <dbReference type="ChEBI" id="CHEBI:33384"/>
        <dbReference type="ChEBI" id="CHEBI:78442"/>
        <dbReference type="ChEBI" id="CHEBI:78533"/>
        <dbReference type="ChEBI" id="CHEBI:456215"/>
        <dbReference type="EC" id="6.1.1.11"/>
    </reaction>
</comment>
<comment type="catalytic activity">
    <reaction evidence="1">
        <text>tRNA(Sec) + L-serine + ATP = L-seryl-tRNA(Sec) + AMP + diphosphate + H(+)</text>
        <dbReference type="Rhea" id="RHEA:42580"/>
        <dbReference type="Rhea" id="RHEA-COMP:9742"/>
        <dbReference type="Rhea" id="RHEA-COMP:10128"/>
        <dbReference type="ChEBI" id="CHEBI:15378"/>
        <dbReference type="ChEBI" id="CHEBI:30616"/>
        <dbReference type="ChEBI" id="CHEBI:33019"/>
        <dbReference type="ChEBI" id="CHEBI:33384"/>
        <dbReference type="ChEBI" id="CHEBI:78442"/>
        <dbReference type="ChEBI" id="CHEBI:78533"/>
        <dbReference type="ChEBI" id="CHEBI:456215"/>
        <dbReference type="EC" id="6.1.1.11"/>
    </reaction>
</comment>
<comment type="pathway">
    <text evidence="1">Aminoacyl-tRNA biosynthesis; selenocysteinyl-tRNA(Sec) biosynthesis; L-seryl-tRNA(Sec) from L-serine and tRNA(Sec): step 1/1.</text>
</comment>
<comment type="subunit">
    <text evidence="1">Homodimer. The tRNA molecule binds across the dimer.</text>
</comment>
<comment type="subcellular location">
    <subcellularLocation>
        <location evidence="1">Cytoplasm</location>
    </subcellularLocation>
</comment>
<comment type="domain">
    <text evidence="1">Consists of two distinct domains, a catalytic core and a N-terminal extension that is involved in tRNA binding.</text>
</comment>
<comment type="similarity">
    <text evidence="1">Belongs to the class-II aminoacyl-tRNA synthetase family. Type-1 seryl-tRNA synthetase subfamily.</text>
</comment>
<sequence>MLDINLIRNNPELVKNDLKKRGELDKIAWIDEILRLDEEWRKKLKEINRLRHERNKIAIEIGKRKKAGEPVEDLLAKSKEIVKRIEELEKEVEELRKRIDYYLWRLPNITHPSVPVGKDENDNVPIRFWGKAKVWKGHLESFLEQSQGKMEYEVLEWRPKLHVDLLEILGGADFARAAKVSGSRFYYLLNEIVILDLALIRFALDRLIEKGFTPVIPPYMVRRFVEEGSTTFEDFEDVIYKVEGEDLYLIPTAEHPLAGMHANEILDGKDLPLLYVAFSPCFRKEAGTAGKDTKGIFRVHQFHKVEQFVYSRPEESWEWHERLVRNAEELFQELEIPYRVVNICTGDLGYVAAKKYDIEAWMPGQGRFREVVSASNCTDWQARRLNIRFRDRTDEKPRYVHTLNSTAIATSRAIVAILENHQQEDGTVKIPRALWKYTGFKEIVPVEKKEGCCKA</sequence>
<name>SYS_PYRFU</name>
<proteinExistence type="inferred from homology"/>
<accession>Q8U1K2</accession>